<sequence length="299" mass="34448">MALDKDIVGSIEFLEVIGLEGSTYLLKGPNGEQVKLNQSEINDEDELETGEEYSFFIYPNRSGELFATQNMPDITKDKYDFAKVLKTDRDGARVDVGLPREVLIPWEDLPKVKSLWPQTGDYVLVTLRIDRENQMFARLASETIVEKMFTPVYDDEKQNELIKARPYRLLRIGSFLLSKEGYKIFVHESERKEEPRLGEEVEVRIIGHNDRGELNGSFLPLAHERLDDDGQVIFDLLVEYEGELPFWDKSSPEAIKEVFNMSKGSFKRAIGHLYKHKIINIETGKISLTKKGWSRVEDK</sequence>
<protein>
    <recommendedName>
        <fullName>Conserved virulence factor B</fullName>
    </recommendedName>
</protein>
<comment type="similarity">
    <text evidence="1">Belongs to the CvfB family.</text>
</comment>
<gene>
    <name type="primary">cvfB</name>
    <name type="ordered locus">SH1521</name>
</gene>
<dbReference type="EMBL" id="AP006716">
    <property type="protein sequence ID" value="BAE04830.1"/>
    <property type="molecule type" value="Genomic_DNA"/>
</dbReference>
<dbReference type="RefSeq" id="WP_011275813.1">
    <property type="nucleotide sequence ID" value="NC_007168.1"/>
</dbReference>
<dbReference type="SMR" id="Q4L695"/>
<dbReference type="KEGG" id="sha:SH1521"/>
<dbReference type="eggNOG" id="COG2996">
    <property type="taxonomic scope" value="Bacteria"/>
</dbReference>
<dbReference type="HOGENOM" id="CLU_064885_0_0_9"/>
<dbReference type="OrthoDB" id="9801597at2"/>
<dbReference type="Proteomes" id="UP000000543">
    <property type="component" value="Chromosome"/>
</dbReference>
<dbReference type="Gene3D" id="2.40.50.140">
    <property type="entry name" value="Nucleic acid-binding proteins"/>
    <property type="match status" value="2"/>
</dbReference>
<dbReference type="Gene3D" id="1.10.10.10">
    <property type="entry name" value="Winged helix-like DNA-binding domain superfamily/Winged helix DNA-binding domain"/>
    <property type="match status" value="1"/>
</dbReference>
<dbReference type="InterPro" id="IPR014464">
    <property type="entry name" value="CvfB_fam"/>
</dbReference>
<dbReference type="InterPro" id="IPR048588">
    <property type="entry name" value="CvfB_S1_2nd"/>
</dbReference>
<dbReference type="InterPro" id="IPR048587">
    <property type="entry name" value="CvfB_S1_3rd"/>
</dbReference>
<dbReference type="InterPro" id="IPR039566">
    <property type="entry name" value="CvfB_S1_st"/>
</dbReference>
<dbReference type="InterPro" id="IPR040764">
    <property type="entry name" value="CvfB_WH"/>
</dbReference>
<dbReference type="InterPro" id="IPR012340">
    <property type="entry name" value="NA-bd_OB-fold"/>
</dbReference>
<dbReference type="InterPro" id="IPR036388">
    <property type="entry name" value="WH-like_DNA-bd_sf"/>
</dbReference>
<dbReference type="PANTHER" id="PTHR37296">
    <property type="entry name" value="CONSERVED VIRULENCE FACTOR B"/>
    <property type="match status" value="1"/>
</dbReference>
<dbReference type="PANTHER" id="PTHR37296:SF1">
    <property type="entry name" value="CONSERVED VIRULENCE FACTOR B"/>
    <property type="match status" value="1"/>
</dbReference>
<dbReference type="Pfam" id="PF21191">
    <property type="entry name" value="CvfB_1st"/>
    <property type="match status" value="1"/>
</dbReference>
<dbReference type="Pfam" id="PF21543">
    <property type="entry name" value="CvfB_2nd"/>
    <property type="match status" value="1"/>
</dbReference>
<dbReference type="Pfam" id="PF17783">
    <property type="entry name" value="CvfB_WH"/>
    <property type="match status" value="1"/>
</dbReference>
<dbReference type="Pfam" id="PF13509">
    <property type="entry name" value="S1_2"/>
    <property type="match status" value="1"/>
</dbReference>
<dbReference type="PIRSF" id="PIRSF012524">
    <property type="entry name" value="YitL_S1"/>
    <property type="match status" value="1"/>
</dbReference>
<organism>
    <name type="scientific">Staphylococcus haemolyticus (strain JCSC1435)</name>
    <dbReference type="NCBI Taxonomy" id="279808"/>
    <lineage>
        <taxon>Bacteria</taxon>
        <taxon>Bacillati</taxon>
        <taxon>Bacillota</taxon>
        <taxon>Bacilli</taxon>
        <taxon>Bacillales</taxon>
        <taxon>Staphylococcaceae</taxon>
        <taxon>Staphylococcus</taxon>
    </lineage>
</organism>
<feature type="chain" id="PRO_0000282300" description="Conserved virulence factor B">
    <location>
        <begin position="1"/>
        <end position="299"/>
    </location>
</feature>
<proteinExistence type="inferred from homology"/>
<name>CVFB_STAHJ</name>
<evidence type="ECO:0000305" key="1"/>
<accession>Q4L695</accession>
<reference key="1">
    <citation type="journal article" date="2005" name="J. Bacteriol.">
        <title>Whole-genome sequencing of Staphylococcus haemolyticus uncovers the extreme plasticity of its genome and the evolution of human-colonizing staphylococcal species.</title>
        <authorList>
            <person name="Takeuchi F."/>
            <person name="Watanabe S."/>
            <person name="Baba T."/>
            <person name="Yuzawa H."/>
            <person name="Ito T."/>
            <person name="Morimoto Y."/>
            <person name="Kuroda M."/>
            <person name="Cui L."/>
            <person name="Takahashi M."/>
            <person name="Ankai A."/>
            <person name="Baba S."/>
            <person name="Fukui S."/>
            <person name="Lee J.C."/>
            <person name="Hiramatsu K."/>
        </authorList>
    </citation>
    <scope>NUCLEOTIDE SEQUENCE [LARGE SCALE GENOMIC DNA]</scope>
    <source>
        <strain>JCSC1435</strain>
    </source>
</reference>